<feature type="chain" id="PRO_1000146263" description="Putative 3-methyladenine DNA glycosylase">
    <location>
        <begin position="1"/>
        <end position="203"/>
    </location>
</feature>
<comment type="similarity">
    <text evidence="1">Belongs to the DNA glycosylase MPG family.</text>
</comment>
<evidence type="ECO:0000255" key="1">
    <source>
        <dbReference type="HAMAP-Rule" id="MF_00527"/>
    </source>
</evidence>
<keyword id="KW-0227">DNA damage</keyword>
<keyword id="KW-0234">DNA repair</keyword>
<keyword id="KW-0378">Hydrolase</keyword>
<protein>
    <recommendedName>
        <fullName evidence="1">Putative 3-methyladenine DNA glycosylase</fullName>
        <ecNumber evidence="1">3.2.2.-</ecNumber>
    </recommendedName>
</protein>
<gene>
    <name type="ordered locus">CLM_1424</name>
</gene>
<reference key="1">
    <citation type="submission" date="2008-10" db="EMBL/GenBank/DDBJ databases">
        <title>Genome sequence of Clostridium botulinum A2 Kyoto.</title>
        <authorList>
            <person name="Shrivastava S."/>
            <person name="Brinkac L.M."/>
            <person name="Brown J.L."/>
            <person name="Bruce D."/>
            <person name="Detter C.C."/>
            <person name="Johnson E.A."/>
            <person name="Munk C.A."/>
            <person name="Smith L.A."/>
            <person name="Smith T.J."/>
            <person name="Sutton G."/>
            <person name="Brettin T.S."/>
        </authorList>
    </citation>
    <scope>NUCLEOTIDE SEQUENCE [LARGE SCALE GENOMIC DNA]</scope>
    <source>
        <strain>Kyoto / Type A2</strain>
    </source>
</reference>
<organism>
    <name type="scientific">Clostridium botulinum (strain Kyoto / Type A2)</name>
    <dbReference type="NCBI Taxonomy" id="536232"/>
    <lineage>
        <taxon>Bacteria</taxon>
        <taxon>Bacillati</taxon>
        <taxon>Bacillota</taxon>
        <taxon>Clostridia</taxon>
        <taxon>Eubacteriales</taxon>
        <taxon>Clostridiaceae</taxon>
        <taxon>Clostridium</taxon>
    </lineage>
</organism>
<sequence>MRLTRDFYAKDARVLAKELLGKVLVREVDGIKLKGKIVETEAYIGAIDKASHAYGGRRTKRTEPLYGKPGIAYVYFIYGKYFCFNIISKTEGEAEGVLIRALEPLENINLISKLRFNKEFEELNNYQRKNITSGPSKLCMAFNINRDNNWEDLCESSSLYVEDVFYNDFEIIETVRVGIDYAEEARDFLWRYYIKDNAFVSVK</sequence>
<accession>C1FKZ0</accession>
<name>3MGH_CLOBJ</name>
<dbReference type="EC" id="3.2.2.-" evidence="1"/>
<dbReference type="EMBL" id="CP001581">
    <property type="protein sequence ID" value="ACO84492.1"/>
    <property type="molecule type" value="Genomic_DNA"/>
</dbReference>
<dbReference type="RefSeq" id="WP_003356430.1">
    <property type="nucleotide sequence ID" value="NC_012563.1"/>
</dbReference>
<dbReference type="SMR" id="C1FKZ0"/>
<dbReference type="KEGG" id="cby:CLM_1424"/>
<dbReference type="eggNOG" id="COG2094">
    <property type="taxonomic scope" value="Bacteria"/>
</dbReference>
<dbReference type="HOGENOM" id="CLU_060471_0_2_9"/>
<dbReference type="Proteomes" id="UP000001374">
    <property type="component" value="Chromosome"/>
</dbReference>
<dbReference type="GO" id="GO:0003905">
    <property type="term" value="F:alkylbase DNA N-glycosylase activity"/>
    <property type="evidence" value="ECO:0007669"/>
    <property type="project" value="InterPro"/>
</dbReference>
<dbReference type="GO" id="GO:0003677">
    <property type="term" value="F:DNA binding"/>
    <property type="evidence" value="ECO:0007669"/>
    <property type="project" value="InterPro"/>
</dbReference>
<dbReference type="GO" id="GO:0006284">
    <property type="term" value="P:base-excision repair"/>
    <property type="evidence" value="ECO:0007669"/>
    <property type="project" value="InterPro"/>
</dbReference>
<dbReference type="CDD" id="cd00540">
    <property type="entry name" value="AAG"/>
    <property type="match status" value="1"/>
</dbReference>
<dbReference type="FunFam" id="3.10.300.10:FF:000001">
    <property type="entry name" value="Putative 3-methyladenine DNA glycosylase"/>
    <property type="match status" value="1"/>
</dbReference>
<dbReference type="Gene3D" id="3.10.300.10">
    <property type="entry name" value="Methylpurine-DNA glycosylase (MPG)"/>
    <property type="match status" value="1"/>
</dbReference>
<dbReference type="HAMAP" id="MF_00527">
    <property type="entry name" value="3MGH"/>
    <property type="match status" value="1"/>
</dbReference>
<dbReference type="InterPro" id="IPR011034">
    <property type="entry name" value="Formyl_transferase-like_C_sf"/>
</dbReference>
<dbReference type="InterPro" id="IPR003180">
    <property type="entry name" value="MPG"/>
</dbReference>
<dbReference type="InterPro" id="IPR036995">
    <property type="entry name" value="MPG_sf"/>
</dbReference>
<dbReference type="NCBIfam" id="TIGR00567">
    <property type="entry name" value="3mg"/>
    <property type="match status" value="1"/>
</dbReference>
<dbReference type="NCBIfam" id="NF002001">
    <property type="entry name" value="PRK00802.1-1"/>
    <property type="match status" value="1"/>
</dbReference>
<dbReference type="PANTHER" id="PTHR10429">
    <property type="entry name" value="DNA-3-METHYLADENINE GLYCOSYLASE"/>
    <property type="match status" value="1"/>
</dbReference>
<dbReference type="PANTHER" id="PTHR10429:SF0">
    <property type="entry name" value="DNA-3-METHYLADENINE GLYCOSYLASE"/>
    <property type="match status" value="1"/>
</dbReference>
<dbReference type="Pfam" id="PF02245">
    <property type="entry name" value="Pur_DNA_glyco"/>
    <property type="match status" value="1"/>
</dbReference>
<dbReference type="SUPFAM" id="SSF50486">
    <property type="entry name" value="FMT C-terminal domain-like"/>
    <property type="match status" value="1"/>
</dbReference>
<proteinExistence type="inferred from homology"/>